<name>SYY_PHOPR</name>
<accession>Q6LUR9</accession>
<evidence type="ECO:0000255" key="1">
    <source>
        <dbReference type="HAMAP-Rule" id="MF_02007"/>
    </source>
</evidence>
<feature type="chain" id="PRO_0000236742" description="Tyrosine--tRNA ligase">
    <location>
        <begin position="1"/>
        <end position="395"/>
    </location>
</feature>
<feature type="domain" description="S4 RNA-binding" evidence="1">
    <location>
        <begin position="334"/>
        <end position="394"/>
    </location>
</feature>
<feature type="short sequence motif" description="'HIGH' region">
    <location>
        <begin position="42"/>
        <end position="51"/>
    </location>
</feature>
<feature type="short sequence motif" description="'KMSKS' region">
    <location>
        <begin position="226"/>
        <end position="230"/>
    </location>
</feature>
<feature type="binding site" evidence="1">
    <location>
        <position position="229"/>
    </location>
    <ligand>
        <name>ATP</name>
        <dbReference type="ChEBI" id="CHEBI:30616"/>
    </ligand>
</feature>
<sequence length="395" mass="44184">MASIEQALAEIKRGIDELIPEEELIAKLKENRPLRIKLGADPTAPDIHLGHTVILNKLRTFQELGHDVTFLIGDFTGMVGDPTGKNTTRPPLTREDVLANAETYKEQVFKILDPAKTKIEFNSTWLSELGAEGMIRLASNQTVARMLERDDFKKRYNGGRPIAIHEFMYPLLQGYDSVAMETDVELGGTDQKFNLLMGRELQKSHGQKPQVVLTMPLLVGLDGVKKMSKSAHNYIGVSEVPTEMFGKIMSISDDLMWNYFECLSFRPLEEIEQFKQDMANGKNPRDVKILLAKEIIARFHSEADADAAEQEFINRFQKGAMPEEMPELEFEAGIAISNLLKDAGLVNSTSDAMRMIRQGGAKIDGNKIEDTKLIPAAGTAVYQVGKRKFARITLK</sequence>
<dbReference type="EC" id="6.1.1.1" evidence="1"/>
<dbReference type="EMBL" id="CR378664">
    <property type="protein sequence ID" value="CAG18956.1"/>
    <property type="molecule type" value="Genomic_DNA"/>
</dbReference>
<dbReference type="RefSeq" id="WP_011217309.1">
    <property type="nucleotide sequence ID" value="NC_006370.1"/>
</dbReference>
<dbReference type="SMR" id="Q6LUR9"/>
<dbReference type="STRING" id="298386.PBPRA0533"/>
<dbReference type="KEGG" id="ppr:PBPRA0533"/>
<dbReference type="eggNOG" id="COG0162">
    <property type="taxonomic scope" value="Bacteria"/>
</dbReference>
<dbReference type="HOGENOM" id="CLU_024003_5_0_6"/>
<dbReference type="Proteomes" id="UP000000593">
    <property type="component" value="Chromosome 1"/>
</dbReference>
<dbReference type="GO" id="GO:0005829">
    <property type="term" value="C:cytosol"/>
    <property type="evidence" value="ECO:0007669"/>
    <property type="project" value="TreeGrafter"/>
</dbReference>
<dbReference type="GO" id="GO:0005524">
    <property type="term" value="F:ATP binding"/>
    <property type="evidence" value="ECO:0007669"/>
    <property type="project" value="UniProtKB-UniRule"/>
</dbReference>
<dbReference type="GO" id="GO:0003723">
    <property type="term" value="F:RNA binding"/>
    <property type="evidence" value="ECO:0007669"/>
    <property type="project" value="UniProtKB-KW"/>
</dbReference>
<dbReference type="GO" id="GO:0004831">
    <property type="term" value="F:tyrosine-tRNA ligase activity"/>
    <property type="evidence" value="ECO:0007669"/>
    <property type="project" value="UniProtKB-UniRule"/>
</dbReference>
<dbReference type="GO" id="GO:0006437">
    <property type="term" value="P:tyrosyl-tRNA aminoacylation"/>
    <property type="evidence" value="ECO:0007669"/>
    <property type="project" value="UniProtKB-UniRule"/>
</dbReference>
<dbReference type="CDD" id="cd00165">
    <property type="entry name" value="S4"/>
    <property type="match status" value="1"/>
</dbReference>
<dbReference type="CDD" id="cd00805">
    <property type="entry name" value="TyrRS_core"/>
    <property type="match status" value="1"/>
</dbReference>
<dbReference type="FunFam" id="1.10.240.10:FF:000006">
    <property type="entry name" value="Tyrosine--tRNA ligase"/>
    <property type="match status" value="1"/>
</dbReference>
<dbReference type="FunFam" id="3.10.290.10:FF:000022">
    <property type="entry name" value="Tyrosine--tRNA ligase"/>
    <property type="match status" value="1"/>
</dbReference>
<dbReference type="FunFam" id="3.40.50.620:FF:000061">
    <property type="entry name" value="Tyrosine--tRNA ligase"/>
    <property type="match status" value="1"/>
</dbReference>
<dbReference type="Gene3D" id="3.40.50.620">
    <property type="entry name" value="HUPs"/>
    <property type="match status" value="1"/>
</dbReference>
<dbReference type="Gene3D" id="3.10.290.10">
    <property type="entry name" value="RNA-binding S4 domain"/>
    <property type="match status" value="1"/>
</dbReference>
<dbReference type="Gene3D" id="1.10.240.10">
    <property type="entry name" value="Tyrosyl-Transfer RNA Synthetase"/>
    <property type="match status" value="1"/>
</dbReference>
<dbReference type="HAMAP" id="MF_02007">
    <property type="entry name" value="Tyr_tRNA_synth_type2"/>
    <property type="match status" value="1"/>
</dbReference>
<dbReference type="InterPro" id="IPR001412">
    <property type="entry name" value="aa-tRNA-synth_I_CS"/>
</dbReference>
<dbReference type="InterPro" id="IPR002305">
    <property type="entry name" value="aa-tRNA-synth_Ic"/>
</dbReference>
<dbReference type="InterPro" id="IPR014729">
    <property type="entry name" value="Rossmann-like_a/b/a_fold"/>
</dbReference>
<dbReference type="InterPro" id="IPR036986">
    <property type="entry name" value="S4_RNA-bd_sf"/>
</dbReference>
<dbReference type="InterPro" id="IPR002307">
    <property type="entry name" value="Tyr-tRNA-ligase"/>
</dbReference>
<dbReference type="InterPro" id="IPR024088">
    <property type="entry name" value="Tyr-tRNA-ligase_bac-type"/>
</dbReference>
<dbReference type="InterPro" id="IPR024108">
    <property type="entry name" value="Tyr-tRNA-ligase_bac_2"/>
</dbReference>
<dbReference type="NCBIfam" id="TIGR00234">
    <property type="entry name" value="tyrS"/>
    <property type="match status" value="1"/>
</dbReference>
<dbReference type="PANTHER" id="PTHR11766:SF1">
    <property type="entry name" value="TYROSINE--TRNA LIGASE"/>
    <property type="match status" value="1"/>
</dbReference>
<dbReference type="PANTHER" id="PTHR11766">
    <property type="entry name" value="TYROSYL-TRNA SYNTHETASE"/>
    <property type="match status" value="1"/>
</dbReference>
<dbReference type="Pfam" id="PF00579">
    <property type="entry name" value="tRNA-synt_1b"/>
    <property type="match status" value="1"/>
</dbReference>
<dbReference type="PRINTS" id="PR01040">
    <property type="entry name" value="TRNASYNTHTYR"/>
</dbReference>
<dbReference type="SUPFAM" id="SSF55174">
    <property type="entry name" value="Alpha-L RNA-binding motif"/>
    <property type="match status" value="1"/>
</dbReference>
<dbReference type="SUPFAM" id="SSF52374">
    <property type="entry name" value="Nucleotidylyl transferase"/>
    <property type="match status" value="1"/>
</dbReference>
<dbReference type="PROSITE" id="PS00178">
    <property type="entry name" value="AA_TRNA_LIGASE_I"/>
    <property type="match status" value="1"/>
</dbReference>
<dbReference type="PROSITE" id="PS50889">
    <property type="entry name" value="S4"/>
    <property type="match status" value="1"/>
</dbReference>
<gene>
    <name evidence="1" type="primary">tyrS</name>
    <name type="ordered locus">PBPRA0533</name>
</gene>
<comment type="function">
    <text evidence="1">Catalyzes the attachment of tyrosine to tRNA(Tyr) in a two-step reaction: tyrosine is first activated by ATP to form Tyr-AMP and then transferred to the acceptor end of tRNA(Tyr).</text>
</comment>
<comment type="catalytic activity">
    <reaction evidence="1">
        <text>tRNA(Tyr) + L-tyrosine + ATP = L-tyrosyl-tRNA(Tyr) + AMP + diphosphate + H(+)</text>
        <dbReference type="Rhea" id="RHEA:10220"/>
        <dbReference type="Rhea" id="RHEA-COMP:9706"/>
        <dbReference type="Rhea" id="RHEA-COMP:9707"/>
        <dbReference type="ChEBI" id="CHEBI:15378"/>
        <dbReference type="ChEBI" id="CHEBI:30616"/>
        <dbReference type="ChEBI" id="CHEBI:33019"/>
        <dbReference type="ChEBI" id="CHEBI:58315"/>
        <dbReference type="ChEBI" id="CHEBI:78442"/>
        <dbReference type="ChEBI" id="CHEBI:78536"/>
        <dbReference type="ChEBI" id="CHEBI:456215"/>
        <dbReference type="EC" id="6.1.1.1"/>
    </reaction>
</comment>
<comment type="subunit">
    <text evidence="1">Homodimer.</text>
</comment>
<comment type="subcellular location">
    <subcellularLocation>
        <location evidence="1">Cytoplasm</location>
    </subcellularLocation>
</comment>
<comment type="similarity">
    <text evidence="1">Belongs to the class-I aminoacyl-tRNA synthetase family. TyrS type 2 subfamily.</text>
</comment>
<keyword id="KW-0030">Aminoacyl-tRNA synthetase</keyword>
<keyword id="KW-0067">ATP-binding</keyword>
<keyword id="KW-0963">Cytoplasm</keyword>
<keyword id="KW-0436">Ligase</keyword>
<keyword id="KW-0547">Nucleotide-binding</keyword>
<keyword id="KW-0648">Protein biosynthesis</keyword>
<keyword id="KW-1185">Reference proteome</keyword>
<keyword id="KW-0694">RNA-binding</keyword>
<organism>
    <name type="scientific">Photobacterium profundum (strain SS9)</name>
    <dbReference type="NCBI Taxonomy" id="298386"/>
    <lineage>
        <taxon>Bacteria</taxon>
        <taxon>Pseudomonadati</taxon>
        <taxon>Pseudomonadota</taxon>
        <taxon>Gammaproteobacteria</taxon>
        <taxon>Vibrionales</taxon>
        <taxon>Vibrionaceae</taxon>
        <taxon>Photobacterium</taxon>
    </lineage>
</organism>
<protein>
    <recommendedName>
        <fullName evidence="1">Tyrosine--tRNA ligase</fullName>
        <ecNumber evidence="1">6.1.1.1</ecNumber>
    </recommendedName>
    <alternativeName>
        <fullName evidence="1">Tyrosyl-tRNA synthetase</fullName>
        <shortName evidence="1">TyrRS</shortName>
    </alternativeName>
</protein>
<proteinExistence type="inferred from homology"/>
<reference key="1">
    <citation type="journal article" date="2005" name="Science">
        <title>Life at depth: Photobacterium profundum genome sequence and expression analysis.</title>
        <authorList>
            <person name="Vezzi A."/>
            <person name="Campanaro S."/>
            <person name="D'Angelo M."/>
            <person name="Simonato F."/>
            <person name="Vitulo N."/>
            <person name="Lauro F.M."/>
            <person name="Cestaro A."/>
            <person name="Malacrida G."/>
            <person name="Simionati B."/>
            <person name="Cannata N."/>
            <person name="Romualdi C."/>
            <person name="Bartlett D.H."/>
            <person name="Valle G."/>
        </authorList>
    </citation>
    <scope>NUCLEOTIDE SEQUENCE [LARGE SCALE GENOMIC DNA]</scope>
    <source>
        <strain>ATCC BAA-1253 / SS9</strain>
    </source>
</reference>